<name>CMR1_NEUCR</name>
<feature type="chain" id="PRO_0000351111" description="DNA damage-binding protein cmr1">
    <location>
        <begin position="1"/>
        <end position="521"/>
    </location>
</feature>
<feature type="repeat" description="WD 1" evidence="2">
    <location>
        <begin position="183"/>
        <end position="224"/>
    </location>
</feature>
<feature type="repeat" description="WD 2" evidence="2">
    <location>
        <begin position="242"/>
        <end position="282"/>
    </location>
</feature>
<feature type="repeat" description="WD 3" evidence="2">
    <location>
        <begin position="333"/>
        <end position="373"/>
    </location>
</feature>
<feature type="repeat" description="WD 4" evidence="2">
    <location>
        <begin position="382"/>
        <end position="422"/>
    </location>
</feature>
<feature type="repeat" description="WD 5" evidence="2">
    <location>
        <begin position="490"/>
        <end position="521"/>
    </location>
</feature>
<feature type="region of interest" description="Disordered" evidence="3">
    <location>
        <begin position="36"/>
        <end position="75"/>
    </location>
</feature>
<feature type="compositionally biased region" description="Basic and acidic residues" evidence="3">
    <location>
        <begin position="55"/>
        <end position="66"/>
    </location>
</feature>
<comment type="function">
    <text evidence="1">DNA-binding protein that binds to both single- and double-stranded DNA. Binds preferentially to UV-damaged DNA. May be involved in DNA-metabolic processes.</text>
</comment>
<comment type="similarity">
    <text evidence="4">Belongs to the WD repeat DDB2/WDR76 family.</text>
</comment>
<organism>
    <name type="scientific">Neurospora crassa (strain ATCC 24698 / 74-OR23-1A / CBS 708.71 / DSM 1257 / FGSC 987)</name>
    <dbReference type="NCBI Taxonomy" id="367110"/>
    <lineage>
        <taxon>Eukaryota</taxon>
        <taxon>Fungi</taxon>
        <taxon>Dikarya</taxon>
        <taxon>Ascomycota</taxon>
        <taxon>Pezizomycotina</taxon>
        <taxon>Sordariomycetes</taxon>
        <taxon>Sordariomycetidae</taxon>
        <taxon>Sordariales</taxon>
        <taxon>Sordariaceae</taxon>
        <taxon>Neurospora</taxon>
    </lineage>
</organism>
<accession>Q7S1H9</accession>
<keyword id="KW-0227">DNA damage</keyword>
<keyword id="KW-0238">DNA-binding</keyword>
<keyword id="KW-1185">Reference proteome</keyword>
<keyword id="KW-0677">Repeat</keyword>
<keyword id="KW-0853">WD repeat</keyword>
<sequence>MPPRKKETVMSEFERKRLENIAYNNAILSGISTTADKIIPKPAPPKPKRASTPRVKREPVKKEAARPTRQSSRLAGLEADSAVLKRKLDVEAEEEAAKAKAKRMRVSGDLNLGDITVEGRKWESSADGLALLKGLGVRGAQPGVRTFTEKDVKHTKDKGLKDLRLRMSGLKLYEKWAVNDIKIVPQRIYSMCFHPTEEKPIIFAGDKEGAMGVFDASQPTPKIEDDDEDAEYPDPIISAFKTHSRTISSFHFSPTDANAIYSASYDSSIRKLDLDKGISTEIFAPSSSSEDLPISAIDIPTTDPNMIIFSTLHGSLGRQDQRTKPSSAEIWGLTDHKIGGFSLHPRHPYLVATASLDRTLKIWDLRKITGKGDLRHPALLGEHESRLSVSHASWSSSGHIATSSYDDRIKIYSFPSAGEWKAGHDIPAKEMQPTVEIPHNNQTGRWVTILKPQWQRNPQDGWQKFAIGNMNRFVDVYAEDGEQLAQLGGDGITAVPAVAHFHPTKDWVAGGTASGKLCLWM</sequence>
<dbReference type="EMBL" id="CM002242">
    <property type="protein sequence ID" value="EAA29212.1"/>
    <property type="molecule type" value="Genomic_DNA"/>
</dbReference>
<dbReference type="RefSeq" id="XP_958448.1">
    <property type="nucleotide sequence ID" value="XM_953355.2"/>
</dbReference>
<dbReference type="SMR" id="Q7S1H9"/>
<dbReference type="FunCoup" id="Q7S1H9">
    <property type="interactions" value="644"/>
</dbReference>
<dbReference type="STRING" id="367110.Q7S1H9"/>
<dbReference type="PaxDb" id="5141-EFNCRP00000009833"/>
<dbReference type="EnsemblFungi" id="EAA29212">
    <property type="protein sequence ID" value="EAA29212"/>
    <property type="gene ID" value="NCU09302"/>
</dbReference>
<dbReference type="GeneID" id="23568508"/>
<dbReference type="KEGG" id="ncr:NCU09302"/>
<dbReference type="VEuPathDB" id="FungiDB:NCU09302"/>
<dbReference type="HOGENOM" id="CLU_017019_1_1_1"/>
<dbReference type="InParanoid" id="Q7S1H9"/>
<dbReference type="OMA" id="DPNTLYW"/>
<dbReference type="OrthoDB" id="9890280at2759"/>
<dbReference type="Proteomes" id="UP000001805">
    <property type="component" value="Chromosome 7, Linkage Group VII"/>
</dbReference>
<dbReference type="GO" id="GO:0000785">
    <property type="term" value="C:chromatin"/>
    <property type="evidence" value="ECO:0007669"/>
    <property type="project" value="EnsemblFungi"/>
</dbReference>
<dbReference type="GO" id="GO:0005737">
    <property type="term" value="C:cytoplasm"/>
    <property type="evidence" value="ECO:0007669"/>
    <property type="project" value="EnsemblFungi"/>
</dbReference>
<dbReference type="GO" id="GO:0034399">
    <property type="term" value="C:nuclear periphery"/>
    <property type="evidence" value="ECO:0007669"/>
    <property type="project" value="EnsemblFungi"/>
</dbReference>
<dbReference type="GO" id="GO:0005634">
    <property type="term" value="C:nucleus"/>
    <property type="evidence" value="ECO:0000318"/>
    <property type="project" value="GO_Central"/>
</dbReference>
<dbReference type="GO" id="GO:0003677">
    <property type="term" value="F:DNA binding"/>
    <property type="evidence" value="ECO:0000318"/>
    <property type="project" value="GO_Central"/>
</dbReference>
<dbReference type="GO" id="GO:0006974">
    <property type="term" value="P:DNA damage response"/>
    <property type="evidence" value="ECO:0007669"/>
    <property type="project" value="UniProtKB-KW"/>
</dbReference>
<dbReference type="GO" id="GO:2000001">
    <property type="term" value="P:regulation of DNA damage checkpoint"/>
    <property type="evidence" value="ECO:0000318"/>
    <property type="project" value="GO_Central"/>
</dbReference>
<dbReference type="FunFam" id="2.130.10.10:FF:000562">
    <property type="entry name" value="DNA damage-binding protein CMR1"/>
    <property type="match status" value="1"/>
</dbReference>
<dbReference type="Gene3D" id="2.130.10.10">
    <property type="entry name" value="YVTN repeat-like/Quinoprotein amine dehydrogenase"/>
    <property type="match status" value="1"/>
</dbReference>
<dbReference type="InterPro" id="IPR015943">
    <property type="entry name" value="WD40/YVTN_repeat-like_dom_sf"/>
</dbReference>
<dbReference type="InterPro" id="IPR036322">
    <property type="entry name" value="WD40_repeat_dom_sf"/>
</dbReference>
<dbReference type="InterPro" id="IPR001680">
    <property type="entry name" value="WD40_rpt"/>
</dbReference>
<dbReference type="InterPro" id="IPR050853">
    <property type="entry name" value="WD_repeat_DNA-damage-binding"/>
</dbReference>
<dbReference type="PANTHER" id="PTHR14773">
    <property type="entry name" value="WD REPEAT-CONTAINING PROTEIN 76"/>
    <property type="match status" value="1"/>
</dbReference>
<dbReference type="PANTHER" id="PTHR14773:SF0">
    <property type="entry name" value="WD REPEAT-CONTAINING PROTEIN 76"/>
    <property type="match status" value="1"/>
</dbReference>
<dbReference type="Pfam" id="PF00400">
    <property type="entry name" value="WD40"/>
    <property type="match status" value="3"/>
</dbReference>
<dbReference type="SMART" id="SM00320">
    <property type="entry name" value="WD40"/>
    <property type="match status" value="5"/>
</dbReference>
<dbReference type="SUPFAM" id="SSF50978">
    <property type="entry name" value="WD40 repeat-like"/>
    <property type="match status" value="1"/>
</dbReference>
<dbReference type="PROSITE" id="PS00678">
    <property type="entry name" value="WD_REPEATS_1"/>
    <property type="match status" value="1"/>
</dbReference>
<dbReference type="PROSITE" id="PS50082">
    <property type="entry name" value="WD_REPEATS_2"/>
    <property type="match status" value="1"/>
</dbReference>
<proteinExistence type="inferred from homology"/>
<protein>
    <recommendedName>
        <fullName evidence="1">DNA damage-binding protein cmr1</fullName>
    </recommendedName>
</protein>
<reference key="1">
    <citation type="journal article" date="2003" name="Nature">
        <title>The genome sequence of the filamentous fungus Neurospora crassa.</title>
        <authorList>
            <person name="Galagan J.E."/>
            <person name="Calvo S.E."/>
            <person name="Borkovich K.A."/>
            <person name="Selker E.U."/>
            <person name="Read N.D."/>
            <person name="Jaffe D.B."/>
            <person name="FitzHugh W."/>
            <person name="Ma L.-J."/>
            <person name="Smirnov S."/>
            <person name="Purcell S."/>
            <person name="Rehman B."/>
            <person name="Elkins T."/>
            <person name="Engels R."/>
            <person name="Wang S."/>
            <person name="Nielsen C.B."/>
            <person name="Butler J."/>
            <person name="Endrizzi M."/>
            <person name="Qui D."/>
            <person name="Ianakiev P."/>
            <person name="Bell-Pedersen D."/>
            <person name="Nelson M.A."/>
            <person name="Werner-Washburne M."/>
            <person name="Selitrennikoff C.P."/>
            <person name="Kinsey J.A."/>
            <person name="Braun E.L."/>
            <person name="Zelter A."/>
            <person name="Schulte U."/>
            <person name="Kothe G.O."/>
            <person name="Jedd G."/>
            <person name="Mewes H.-W."/>
            <person name="Staben C."/>
            <person name="Marcotte E."/>
            <person name="Greenberg D."/>
            <person name="Roy A."/>
            <person name="Foley K."/>
            <person name="Naylor J."/>
            <person name="Stange-Thomann N."/>
            <person name="Barrett R."/>
            <person name="Gnerre S."/>
            <person name="Kamal M."/>
            <person name="Kamvysselis M."/>
            <person name="Mauceli E.W."/>
            <person name="Bielke C."/>
            <person name="Rudd S."/>
            <person name="Frishman D."/>
            <person name="Krystofova S."/>
            <person name="Rasmussen C."/>
            <person name="Metzenberg R.L."/>
            <person name="Perkins D.D."/>
            <person name="Kroken S."/>
            <person name="Cogoni C."/>
            <person name="Macino G."/>
            <person name="Catcheside D.E.A."/>
            <person name="Li W."/>
            <person name="Pratt R.J."/>
            <person name="Osmani S.A."/>
            <person name="DeSouza C.P.C."/>
            <person name="Glass N.L."/>
            <person name="Orbach M.J."/>
            <person name="Berglund J.A."/>
            <person name="Voelker R."/>
            <person name="Yarden O."/>
            <person name="Plamann M."/>
            <person name="Seiler S."/>
            <person name="Dunlap J.C."/>
            <person name="Radford A."/>
            <person name="Aramayo R."/>
            <person name="Natvig D.O."/>
            <person name="Alex L.A."/>
            <person name="Mannhaupt G."/>
            <person name="Ebbole D.J."/>
            <person name="Freitag M."/>
            <person name="Paulsen I."/>
            <person name="Sachs M.S."/>
            <person name="Lander E.S."/>
            <person name="Nusbaum C."/>
            <person name="Birren B.W."/>
        </authorList>
    </citation>
    <scope>NUCLEOTIDE SEQUENCE [LARGE SCALE GENOMIC DNA]</scope>
    <source>
        <strain>ATCC 24698 / 74-OR23-1A / CBS 708.71 / DSM 1257 / FGSC 987</strain>
    </source>
</reference>
<gene>
    <name type="ORF">NCU09302</name>
    <name type="ORF">NCU11420</name>
</gene>
<evidence type="ECO:0000250" key="1">
    <source>
        <dbReference type="UniProtKB" id="Q12510"/>
    </source>
</evidence>
<evidence type="ECO:0000255" key="2"/>
<evidence type="ECO:0000256" key="3">
    <source>
        <dbReference type="SAM" id="MobiDB-lite"/>
    </source>
</evidence>
<evidence type="ECO:0000305" key="4"/>